<comment type="function">
    <text evidence="1">Nucleotidase that shows phosphatase activity on nucleoside 5'-monophosphates.</text>
</comment>
<comment type="catalytic activity">
    <reaction evidence="1">
        <text>a ribonucleoside 5'-phosphate + H2O = a ribonucleoside + phosphate</text>
        <dbReference type="Rhea" id="RHEA:12484"/>
        <dbReference type="ChEBI" id="CHEBI:15377"/>
        <dbReference type="ChEBI" id="CHEBI:18254"/>
        <dbReference type="ChEBI" id="CHEBI:43474"/>
        <dbReference type="ChEBI" id="CHEBI:58043"/>
        <dbReference type="EC" id="3.1.3.5"/>
    </reaction>
</comment>
<comment type="cofactor">
    <cofactor evidence="1">
        <name>a divalent metal cation</name>
        <dbReference type="ChEBI" id="CHEBI:60240"/>
    </cofactor>
    <text evidence="1">Binds 1 divalent metal cation per subunit.</text>
</comment>
<comment type="interaction">
    <interactant intactId="EBI-7531616">
        <id>Q9PF20</id>
    </interactant>
    <interactant intactId="EBI-7531616">
        <id>Q9PF20</id>
        <label>surE</label>
    </interactant>
    <organismsDiffer>false</organismsDiffer>
    <experiments>2</experiments>
</comment>
<comment type="subcellular location">
    <subcellularLocation>
        <location evidence="1">Cytoplasm</location>
    </subcellularLocation>
</comment>
<comment type="similarity">
    <text evidence="1">Belongs to the SurE nucleotidase family.</text>
</comment>
<gene>
    <name evidence="1" type="primary">surE</name>
    <name type="ordered locus">XF_0858</name>
</gene>
<proteinExistence type="evidence at protein level"/>
<evidence type="ECO:0000255" key="1">
    <source>
        <dbReference type="HAMAP-Rule" id="MF_00060"/>
    </source>
</evidence>
<evidence type="ECO:0007829" key="2">
    <source>
        <dbReference type="PDB" id="5KSR"/>
    </source>
</evidence>
<evidence type="ECO:0007829" key="3">
    <source>
        <dbReference type="PDB" id="5KSS"/>
    </source>
</evidence>
<feature type="chain" id="PRO_0000111857" description="5'-nucleotidase SurE">
    <location>
        <begin position="1"/>
        <end position="262"/>
    </location>
</feature>
<feature type="binding site" evidence="1">
    <location>
        <position position="8"/>
    </location>
    <ligand>
        <name>a divalent metal cation</name>
        <dbReference type="ChEBI" id="CHEBI:60240"/>
    </ligand>
</feature>
<feature type="binding site" evidence="1">
    <location>
        <position position="9"/>
    </location>
    <ligand>
        <name>a divalent metal cation</name>
        <dbReference type="ChEBI" id="CHEBI:60240"/>
    </ligand>
</feature>
<feature type="binding site" evidence="1">
    <location>
        <position position="40"/>
    </location>
    <ligand>
        <name>a divalent metal cation</name>
        <dbReference type="ChEBI" id="CHEBI:60240"/>
    </ligand>
</feature>
<feature type="binding site" evidence="1">
    <location>
        <position position="92"/>
    </location>
    <ligand>
        <name>a divalent metal cation</name>
        <dbReference type="ChEBI" id="CHEBI:60240"/>
    </ligand>
</feature>
<feature type="strand" evidence="2">
    <location>
        <begin position="2"/>
        <end position="6"/>
    </location>
</feature>
<feature type="helix" evidence="2">
    <location>
        <begin position="14"/>
        <end position="25"/>
    </location>
</feature>
<feature type="strand" evidence="2">
    <location>
        <begin position="29"/>
        <end position="37"/>
    </location>
</feature>
<feature type="strand" evidence="2">
    <location>
        <begin position="54"/>
        <end position="58"/>
    </location>
</feature>
<feature type="strand" evidence="2">
    <location>
        <begin position="61"/>
        <end position="66"/>
    </location>
</feature>
<feature type="helix" evidence="2">
    <location>
        <begin position="68"/>
        <end position="76"/>
    </location>
</feature>
<feature type="strand" evidence="2">
    <location>
        <begin position="85"/>
        <end position="94"/>
    </location>
</feature>
<feature type="helix" evidence="2">
    <location>
        <begin position="98"/>
        <end position="100"/>
    </location>
</feature>
<feature type="turn" evidence="3">
    <location>
        <begin position="101"/>
        <end position="103"/>
    </location>
</feature>
<feature type="helix" evidence="2">
    <location>
        <begin position="105"/>
        <end position="115"/>
    </location>
</feature>
<feature type="strand" evidence="2">
    <location>
        <begin position="120"/>
        <end position="126"/>
    </location>
</feature>
<feature type="helix" evidence="2">
    <location>
        <begin position="138"/>
        <end position="154"/>
    </location>
</feature>
<feature type="strand" evidence="2">
    <location>
        <begin position="159"/>
        <end position="170"/>
    </location>
</feature>
<feature type="helix" evidence="2">
    <location>
        <begin position="172"/>
        <end position="174"/>
    </location>
</feature>
<feature type="strand" evidence="2">
    <location>
        <begin position="178"/>
        <end position="180"/>
    </location>
</feature>
<feature type="strand" evidence="2">
    <location>
        <begin position="192"/>
        <end position="196"/>
    </location>
</feature>
<feature type="strand" evidence="2">
    <location>
        <begin position="202"/>
        <end position="206"/>
    </location>
</feature>
<feature type="helix" evidence="2">
    <location>
        <begin position="220"/>
        <end position="225"/>
    </location>
</feature>
<feature type="strand" evidence="2">
    <location>
        <begin position="229"/>
        <end position="234"/>
    </location>
</feature>
<feature type="helix" evidence="2">
    <location>
        <begin position="241"/>
        <end position="243"/>
    </location>
</feature>
<feature type="helix" evidence="2">
    <location>
        <begin position="244"/>
        <end position="258"/>
    </location>
</feature>
<sequence>MRVLVSNDDGVDAPGIKILADALRNAGHEVMVVAPDRDRSGASNSLTLDTPIRAKQIDMHTYSVAGTPTDCVHLALTGLLNYDPDIVVSGINNTGNLGDDVIYSGTVSAAMEGRFLGLPAVAVSLVTLYREGQQAPQYETAAHAAINIVAQLKTDPLPADTILNVNVPDVTWQQMRGFKVTRLGNRHRSAPCLTQTDPRGHTIYWIGPAGPEQDAGPGTDFDAVRNTYISITPIHVDLTRYQALENVTRWTDRLTAHMDWPT</sequence>
<accession>Q9PF20</accession>
<name>SURE_XYLFA</name>
<protein>
    <recommendedName>
        <fullName evidence="1">5'-nucleotidase SurE</fullName>
        <ecNumber evidence="1">3.1.3.5</ecNumber>
    </recommendedName>
    <alternativeName>
        <fullName evidence="1">Nucleoside 5'-monophosphate phosphohydrolase</fullName>
    </alternativeName>
</protein>
<dbReference type="EC" id="3.1.3.5" evidence="1"/>
<dbReference type="EMBL" id="AE003849">
    <property type="protein sequence ID" value="AAF83668.1"/>
    <property type="molecule type" value="Genomic_DNA"/>
</dbReference>
<dbReference type="PIR" id="D82754">
    <property type="entry name" value="D82754"/>
</dbReference>
<dbReference type="RefSeq" id="WP_010893378.1">
    <property type="nucleotide sequence ID" value="NC_002488.3"/>
</dbReference>
<dbReference type="PDB" id="5KSQ">
    <property type="method" value="X-ray"/>
    <property type="resolution" value="2.63 A"/>
    <property type="chains" value="A/B=1-262"/>
</dbReference>
<dbReference type="PDB" id="5KSR">
    <property type="method" value="X-ray"/>
    <property type="resolution" value="1.96 A"/>
    <property type="chains" value="A/B/C/D=1-262"/>
</dbReference>
<dbReference type="PDB" id="5KSS">
    <property type="method" value="X-ray"/>
    <property type="resolution" value="2.82 A"/>
    <property type="chains" value="A/B=1-262"/>
</dbReference>
<dbReference type="PDB" id="5KST">
    <property type="method" value="X-ray"/>
    <property type="resolution" value="2.76 A"/>
    <property type="chains" value="A/B/C/D=1-262"/>
</dbReference>
<dbReference type="PDBsum" id="5KSQ"/>
<dbReference type="PDBsum" id="5KSR"/>
<dbReference type="PDBsum" id="5KSS"/>
<dbReference type="PDBsum" id="5KST"/>
<dbReference type="SMR" id="Q9PF20"/>
<dbReference type="MINT" id="Q9PF20"/>
<dbReference type="STRING" id="160492.XF_0858"/>
<dbReference type="KEGG" id="xfa:XF_0858"/>
<dbReference type="eggNOG" id="COG0496">
    <property type="taxonomic scope" value="Bacteria"/>
</dbReference>
<dbReference type="HOGENOM" id="CLU_045192_1_2_6"/>
<dbReference type="Proteomes" id="UP000000812">
    <property type="component" value="Chromosome"/>
</dbReference>
<dbReference type="GO" id="GO:0005737">
    <property type="term" value="C:cytoplasm"/>
    <property type="evidence" value="ECO:0007669"/>
    <property type="project" value="UniProtKB-SubCell"/>
</dbReference>
<dbReference type="GO" id="GO:0008254">
    <property type="term" value="F:3'-nucleotidase activity"/>
    <property type="evidence" value="ECO:0007669"/>
    <property type="project" value="TreeGrafter"/>
</dbReference>
<dbReference type="GO" id="GO:0008253">
    <property type="term" value="F:5'-nucleotidase activity"/>
    <property type="evidence" value="ECO:0007669"/>
    <property type="project" value="UniProtKB-UniRule"/>
</dbReference>
<dbReference type="GO" id="GO:0004309">
    <property type="term" value="F:exopolyphosphatase activity"/>
    <property type="evidence" value="ECO:0007669"/>
    <property type="project" value="TreeGrafter"/>
</dbReference>
<dbReference type="GO" id="GO:0042802">
    <property type="term" value="F:identical protein binding"/>
    <property type="evidence" value="ECO:0000353"/>
    <property type="project" value="IntAct"/>
</dbReference>
<dbReference type="GO" id="GO:0046872">
    <property type="term" value="F:metal ion binding"/>
    <property type="evidence" value="ECO:0007669"/>
    <property type="project" value="UniProtKB-UniRule"/>
</dbReference>
<dbReference type="GO" id="GO:0000166">
    <property type="term" value="F:nucleotide binding"/>
    <property type="evidence" value="ECO:0007669"/>
    <property type="project" value="UniProtKB-KW"/>
</dbReference>
<dbReference type="FunFam" id="3.40.1210.10:FF:000001">
    <property type="entry name" value="5'/3'-nucleotidase SurE"/>
    <property type="match status" value="1"/>
</dbReference>
<dbReference type="Gene3D" id="3.40.1210.10">
    <property type="entry name" value="Survival protein SurE-like phosphatase/nucleotidase"/>
    <property type="match status" value="1"/>
</dbReference>
<dbReference type="HAMAP" id="MF_00060">
    <property type="entry name" value="SurE"/>
    <property type="match status" value="1"/>
</dbReference>
<dbReference type="InterPro" id="IPR030048">
    <property type="entry name" value="SurE"/>
</dbReference>
<dbReference type="InterPro" id="IPR002828">
    <property type="entry name" value="SurE-like_Pase/nucleotidase"/>
</dbReference>
<dbReference type="InterPro" id="IPR036523">
    <property type="entry name" value="SurE-like_sf"/>
</dbReference>
<dbReference type="NCBIfam" id="NF001489">
    <property type="entry name" value="PRK00346.1-3"/>
    <property type="match status" value="1"/>
</dbReference>
<dbReference type="NCBIfam" id="NF001490">
    <property type="entry name" value="PRK00346.1-4"/>
    <property type="match status" value="1"/>
</dbReference>
<dbReference type="NCBIfam" id="TIGR00087">
    <property type="entry name" value="surE"/>
    <property type="match status" value="1"/>
</dbReference>
<dbReference type="PANTHER" id="PTHR30457">
    <property type="entry name" value="5'-NUCLEOTIDASE SURE"/>
    <property type="match status" value="1"/>
</dbReference>
<dbReference type="PANTHER" id="PTHR30457:SF12">
    <property type="entry name" value="5'_3'-NUCLEOTIDASE SURE"/>
    <property type="match status" value="1"/>
</dbReference>
<dbReference type="Pfam" id="PF01975">
    <property type="entry name" value="SurE"/>
    <property type="match status" value="1"/>
</dbReference>
<dbReference type="SUPFAM" id="SSF64167">
    <property type="entry name" value="SurE-like"/>
    <property type="match status" value="1"/>
</dbReference>
<organism>
    <name type="scientific">Xylella fastidiosa (strain 9a5c)</name>
    <dbReference type="NCBI Taxonomy" id="160492"/>
    <lineage>
        <taxon>Bacteria</taxon>
        <taxon>Pseudomonadati</taxon>
        <taxon>Pseudomonadota</taxon>
        <taxon>Gammaproteobacteria</taxon>
        <taxon>Lysobacterales</taxon>
        <taxon>Lysobacteraceae</taxon>
        <taxon>Xylella</taxon>
    </lineage>
</organism>
<keyword id="KW-0002">3D-structure</keyword>
<keyword id="KW-0963">Cytoplasm</keyword>
<keyword id="KW-0378">Hydrolase</keyword>
<keyword id="KW-0479">Metal-binding</keyword>
<keyword id="KW-0547">Nucleotide-binding</keyword>
<reference key="1">
    <citation type="journal article" date="2000" name="Nature">
        <title>The genome sequence of the plant pathogen Xylella fastidiosa.</title>
        <authorList>
            <person name="Simpson A.J.G."/>
            <person name="Reinach F.C."/>
            <person name="Arruda P."/>
            <person name="Abreu F.A."/>
            <person name="Acencio M."/>
            <person name="Alvarenga R."/>
            <person name="Alves L.M.C."/>
            <person name="Araya J.E."/>
            <person name="Baia G.S."/>
            <person name="Baptista C.S."/>
            <person name="Barros M.H."/>
            <person name="Bonaccorsi E.D."/>
            <person name="Bordin S."/>
            <person name="Bove J.M."/>
            <person name="Briones M.R.S."/>
            <person name="Bueno M.R.P."/>
            <person name="Camargo A.A."/>
            <person name="Camargo L.E.A."/>
            <person name="Carraro D.M."/>
            <person name="Carrer H."/>
            <person name="Colauto N.B."/>
            <person name="Colombo C."/>
            <person name="Costa F.F."/>
            <person name="Costa M.C.R."/>
            <person name="Costa-Neto C.M."/>
            <person name="Coutinho L.L."/>
            <person name="Cristofani M."/>
            <person name="Dias-Neto E."/>
            <person name="Docena C."/>
            <person name="El-Dorry H."/>
            <person name="Facincani A.P."/>
            <person name="Ferreira A.J.S."/>
            <person name="Ferreira V.C.A."/>
            <person name="Ferro J.A."/>
            <person name="Fraga J.S."/>
            <person name="Franca S.C."/>
            <person name="Franco M.C."/>
            <person name="Frohme M."/>
            <person name="Furlan L.R."/>
            <person name="Garnier M."/>
            <person name="Goldman G.H."/>
            <person name="Goldman M.H.S."/>
            <person name="Gomes S.L."/>
            <person name="Gruber A."/>
            <person name="Ho P.L."/>
            <person name="Hoheisel J.D."/>
            <person name="Junqueira M.L."/>
            <person name="Kemper E.L."/>
            <person name="Kitajima J.P."/>
            <person name="Krieger J.E."/>
            <person name="Kuramae E.E."/>
            <person name="Laigret F."/>
            <person name="Lambais M.R."/>
            <person name="Leite L.C.C."/>
            <person name="Lemos E.G.M."/>
            <person name="Lemos M.V.F."/>
            <person name="Lopes S.A."/>
            <person name="Lopes C.R."/>
            <person name="Machado J.A."/>
            <person name="Machado M.A."/>
            <person name="Madeira A.M.B.N."/>
            <person name="Madeira H.M.F."/>
            <person name="Marino C.L."/>
            <person name="Marques M.V."/>
            <person name="Martins E.A.L."/>
            <person name="Martins E.M.F."/>
            <person name="Matsukuma A.Y."/>
            <person name="Menck C.F.M."/>
            <person name="Miracca E.C."/>
            <person name="Miyaki C.Y."/>
            <person name="Monteiro-Vitorello C.B."/>
            <person name="Moon D.H."/>
            <person name="Nagai M.A."/>
            <person name="Nascimento A.L.T.O."/>
            <person name="Netto L.E.S."/>
            <person name="Nhani A. Jr."/>
            <person name="Nobrega F.G."/>
            <person name="Nunes L.R."/>
            <person name="Oliveira M.A."/>
            <person name="de Oliveira M.C."/>
            <person name="de Oliveira R.C."/>
            <person name="Palmieri D.A."/>
            <person name="Paris A."/>
            <person name="Peixoto B.R."/>
            <person name="Pereira G.A.G."/>
            <person name="Pereira H.A. Jr."/>
            <person name="Pesquero J.B."/>
            <person name="Quaggio R.B."/>
            <person name="Roberto P.G."/>
            <person name="Rodrigues V."/>
            <person name="de Rosa A.J.M."/>
            <person name="de Rosa V.E. Jr."/>
            <person name="de Sa R.G."/>
            <person name="Santelli R.V."/>
            <person name="Sawasaki H.E."/>
            <person name="da Silva A.C.R."/>
            <person name="da Silva A.M."/>
            <person name="da Silva F.R."/>
            <person name="Silva W.A. Jr."/>
            <person name="da Silveira J.F."/>
            <person name="Silvestri M.L.Z."/>
            <person name="Siqueira W.J."/>
            <person name="de Souza A.A."/>
            <person name="de Souza A.P."/>
            <person name="Terenzi M.F."/>
            <person name="Truffi D."/>
            <person name="Tsai S.M."/>
            <person name="Tsuhako M.H."/>
            <person name="Vallada H."/>
            <person name="Van Sluys M.A."/>
            <person name="Verjovski-Almeida S."/>
            <person name="Vettore A.L."/>
            <person name="Zago M.A."/>
            <person name="Zatz M."/>
            <person name="Meidanis J."/>
            <person name="Setubal J.C."/>
        </authorList>
    </citation>
    <scope>NUCLEOTIDE SEQUENCE [LARGE SCALE GENOMIC DNA]</scope>
    <source>
        <strain>9a5c</strain>
    </source>
</reference>